<organism>
    <name type="scientific">Rattus norvegicus</name>
    <name type="common">Rat</name>
    <dbReference type="NCBI Taxonomy" id="10116"/>
    <lineage>
        <taxon>Eukaryota</taxon>
        <taxon>Metazoa</taxon>
        <taxon>Chordata</taxon>
        <taxon>Craniata</taxon>
        <taxon>Vertebrata</taxon>
        <taxon>Euteleostomi</taxon>
        <taxon>Mammalia</taxon>
        <taxon>Eutheria</taxon>
        <taxon>Euarchontoglires</taxon>
        <taxon>Glires</taxon>
        <taxon>Rodentia</taxon>
        <taxon>Myomorpha</taxon>
        <taxon>Muroidea</taxon>
        <taxon>Muridae</taxon>
        <taxon>Murinae</taxon>
        <taxon>Rattus</taxon>
    </lineage>
</organism>
<evidence type="ECO:0000250" key="1"/>
<evidence type="ECO:0000255" key="2"/>
<reference key="1">
    <citation type="journal article" date="2004" name="Genome Res.">
        <title>The status, quality, and expansion of the NIH full-length cDNA project: the Mammalian Gene Collection (MGC).</title>
        <authorList>
            <consortium name="The MGC Project Team"/>
        </authorList>
    </citation>
    <scope>NUCLEOTIDE SEQUENCE [LARGE SCALE MRNA]</scope>
    <source>
        <tissue>Brain</tissue>
    </source>
</reference>
<gene>
    <name type="primary">Tmem204</name>
    <name type="synonym">Clp24</name>
</gene>
<feature type="chain" id="PRO_0000089867" description="Transmembrane protein 204">
    <location>
        <begin position="1"/>
        <end position="226"/>
    </location>
</feature>
<feature type="topological domain" description="Cytoplasmic" evidence="2">
    <location>
        <begin position="1"/>
        <end position="5"/>
    </location>
</feature>
<feature type="transmembrane region" description="Helical" evidence="2">
    <location>
        <begin position="6"/>
        <end position="26"/>
    </location>
</feature>
<feature type="topological domain" description="Extracellular" evidence="2">
    <location>
        <begin position="27"/>
        <end position="103"/>
    </location>
</feature>
<feature type="transmembrane region" description="Helical" evidence="2">
    <location>
        <begin position="104"/>
        <end position="124"/>
    </location>
</feature>
<feature type="topological domain" description="Cytoplasmic" evidence="2">
    <location>
        <begin position="125"/>
        <end position="136"/>
    </location>
</feature>
<feature type="transmembrane region" description="Helical" evidence="2">
    <location>
        <begin position="137"/>
        <end position="157"/>
    </location>
</feature>
<feature type="topological domain" description="Extracellular" evidence="2">
    <location>
        <begin position="158"/>
        <end position="170"/>
    </location>
</feature>
<feature type="transmembrane region" description="Helical" evidence="2">
    <location>
        <begin position="171"/>
        <end position="191"/>
    </location>
</feature>
<feature type="topological domain" description="Cytoplasmic" evidence="2">
    <location>
        <begin position="192"/>
        <end position="226"/>
    </location>
</feature>
<feature type="glycosylation site" description="N-linked (GlcNAc...) asparagine" evidence="2">
    <location>
        <position position="164"/>
    </location>
</feature>
<protein>
    <recommendedName>
        <fullName>Transmembrane protein 204</fullName>
    </recommendedName>
    <alternativeName>
        <fullName>Claudin-like protein 24</fullName>
    </alternativeName>
</protein>
<proteinExistence type="evidence at transcript level"/>
<accession>Q5M962</accession>
<name>TM204_RAT</name>
<dbReference type="EMBL" id="BC087601">
    <property type="protein sequence ID" value="AAH87601.1"/>
    <property type="molecule type" value="mRNA"/>
</dbReference>
<dbReference type="RefSeq" id="NP_001009620.1">
    <property type="nucleotide sequence ID" value="NM_001009620.1"/>
</dbReference>
<dbReference type="RefSeq" id="XP_017452554.1">
    <property type="nucleotide sequence ID" value="XM_017597065.1"/>
</dbReference>
<dbReference type="FunCoup" id="Q5M962">
    <property type="interactions" value="197"/>
</dbReference>
<dbReference type="STRING" id="10116.ENSRNOP00000022142"/>
<dbReference type="GlyCosmos" id="Q5M962">
    <property type="glycosylation" value="1 site, No reported glycans"/>
</dbReference>
<dbReference type="GlyGen" id="Q5M962">
    <property type="glycosylation" value="1 site"/>
</dbReference>
<dbReference type="PhosphoSitePlus" id="Q5M962"/>
<dbReference type="PaxDb" id="10116-ENSRNOP00000022142"/>
<dbReference type="Ensembl" id="ENSRNOT00000022142.6">
    <property type="protein sequence ID" value="ENSRNOP00000022142.5"/>
    <property type="gene ID" value="ENSRNOG00000016494.6"/>
</dbReference>
<dbReference type="GeneID" id="287129"/>
<dbReference type="KEGG" id="rno:287129"/>
<dbReference type="UCSC" id="RGD:1359314">
    <property type="organism name" value="rat"/>
</dbReference>
<dbReference type="AGR" id="RGD:1359314"/>
<dbReference type="CTD" id="79652"/>
<dbReference type="RGD" id="1359314">
    <property type="gene designation" value="Tmem204"/>
</dbReference>
<dbReference type="eggNOG" id="ENOG502QTQQ">
    <property type="taxonomic scope" value="Eukaryota"/>
</dbReference>
<dbReference type="GeneTree" id="ENSGT00390000015528"/>
<dbReference type="HOGENOM" id="CLU_107201_0_0_1"/>
<dbReference type="InParanoid" id="Q5M962"/>
<dbReference type="OMA" id="WKSCWLA"/>
<dbReference type="OrthoDB" id="9928383at2759"/>
<dbReference type="PhylomeDB" id="Q5M962"/>
<dbReference type="TreeFam" id="TF331492"/>
<dbReference type="PRO" id="PR:Q5M962"/>
<dbReference type="Proteomes" id="UP000002494">
    <property type="component" value="Chromosome 10"/>
</dbReference>
<dbReference type="Bgee" id="ENSRNOG00000016494">
    <property type="expression patterns" value="Expressed in lung and 18 other cell types or tissues"/>
</dbReference>
<dbReference type="GO" id="GO:0005912">
    <property type="term" value="C:adherens junction"/>
    <property type="evidence" value="ECO:0007669"/>
    <property type="project" value="UniProtKB-SubCell"/>
</dbReference>
<dbReference type="GO" id="GO:0005886">
    <property type="term" value="C:plasma membrane"/>
    <property type="evidence" value="ECO:0000266"/>
    <property type="project" value="RGD"/>
</dbReference>
<dbReference type="GO" id="GO:0001945">
    <property type="term" value="P:lymph vessel development"/>
    <property type="evidence" value="ECO:0000266"/>
    <property type="project" value="RGD"/>
</dbReference>
<dbReference type="GO" id="GO:0030947">
    <property type="term" value="P:regulation of vascular endothelial growth factor receptor signaling pathway"/>
    <property type="evidence" value="ECO:0000266"/>
    <property type="project" value="RGD"/>
</dbReference>
<dbReference type="GO" id="GO:0051145">
    <property type="term" value="P:smooth muscle cell differentiation"/>
    <property type="evidence" value="ECO:0000266"/>
    <property type="project" value="RGD"/>
</dbReference>
<dbReference type="FunFam" id="1.20.140.150:FF:000008">
    <property type="entry name" value="Transmembrane protein 204"/>
    <property type="match status" value="1"/>
</dbReference>
<dbReference type="Gene3D" id="1.20.140.150">
    <property type="match status" value="1"/>
</dbReference>
<dbReference type="InterPro" id="IPR038992">
    <property type="entry name" value="TMEM204"/>
</dbReference>
<dbReference type="PANTHER" id="PTHR14627">
    <property type="entry name" value="TRANSMEMBRANE PROTEIN 204"/>
    <property type="match status" value="1"/>
</dbReference>
<dbReference type="PANTHER" id="PTHR14627:SF0">
    <property type="entry name" value="TRANSMEMBRANE PROTEIN 204"/>
    <property type="match status" value="1"/>
</dbReference>
<keyword id="KW-0965">Cell junction</keyword>
<keyword id="KW-1003">Cell membrane</keyword>
<keyword id="KW-0325">Glycoprotein</keyword>
<keyword id="KW-0472">Membrane</keyword>
<keyword id="KW-1185">Reference proteome</keyword>
<keyword id="KW-0812">Transmembrane</keyword>
<keyword id="KW-1133">Transmembrane helix</keyword>
<sequence length="226" mass="24701">MTVQKLVATAVLVALVSLILNNAAAFTPNWVYQTLEDGRKRSVGLWKSCWLVDRGKGGTSPGTRTGQVDTHDCEVLGWGSESAGFQESRGTVKLQFDMMRACNLVATAALAVGQITFILGLTGLPLMSPESQCWEEAMAAAFQLASFVLVIGLVTFYRIGPYTNLSWSCYLNIGACLLATLAAAMLIWNILHRREDCMAPRVIVISRSLTARFRRGLDNDYVESPC</sequence>
<comment type="function">
    <text evidence="1">Can influence paracellular permeability. Appears to be involved in cell-cell interactions through adherens (By similarity).</text>
</comment>
<comment type="subcellular location">
    <subcellularLocation>
        <location>Cell junction</location>
        <location>Adherens junction</location>
    </subcellularLocation>
    <subcellularLocation>
        <location evidence="1">Cell membrane</location>
        <topology evidence="1">Multi-pass membrane protein</topology>
    </subcellularLocation>
    <text evidence="1">Co-localizes with the beta-catenin adherins.</text>
</comment>